<sequence>MAGTFSLEPCSTSSSCNHQGKRSESSLLEKRLSEDSSRHWRLQKWASMSSADASRTLLERREEKAAAAENPLVFLCTRCRRPLGDSLTWVASQEDTNCILLRSVSSNVSVDKEQKLSKCRDEDGCILETLYCSGCSLSLGYVYRCTPKNLDYKRNLFCLSVEAVESYTLGSSEQQIVSEEEFFNLESRVEIEKSIKQMEDVLTVMQAKLWEVESKLSKAGRYS</sequence>
<keyword id="KW-0131">Cell cycle</keyword>
<keyword id="KW-0132">Cell division</keyword>
<keyword id="KW-0137">Centromere</keyword>
<keyword id="KW-0158">Chromosome</keyword>
<keyword id="KW-1017">Isopeptide bond</keyword>
<keyword id="KW-0479">Metal-binding</keyword>
<keyword id="KW-0498">Mitosis</keyword>
<keyword id="KW-0539">Nucleus</keyword>
<keyword id="KW-0597">Phosphoprotein</keyword>
<keyword id="KW-1185">Reference proteome</keyword>
<keyword id="KW-0832">Ubl conjugation</keyword>
<keyword id="KW-0862">Zinc</keyword>
<organism>
    <name type="scientific">Rattus norvegicus</name>
    <name type="common">Rat</name>
    <dbReference type="NCBI Taxonomy" id="10116"/>
    <lineage>
        <taxon>Eukaryota</taxon>
        <taxon>Metazoa</taxon>
        <taxon>Chordata</taxon>
        <taxon>Craniata</taxon>
        <taxon>Vertebrata</taxon>
        <taxon>Euteleostomi</taxon>
        <taxon>Mammalia</taxon>
        <taxon>Eutheria</taxon>
        <taxon>Euarchontoglires</taxon>
        <taxon>Glires</taxon>
        <taxon>Rodentia</taxon>
        <taxon>Myomorpha</taxon>
        <taxon>Muroidea</taxon>
        <taxon>Muridae</taxon>
        <taxon>Murinae</taxon>
        <taxon>Rattus</taxon>
    </lineage>
</organism>
<gene>
    <name type="primary">Mis18a</name>
</gene>
<evidence type="ECO:0000250" key="1">
    <source>
        <dbReference type="UniProtKB" id="Q9NYP9"/>
    </source>
</evidence>
<evidence type="ECO:0000255" key="2">
    <source>
        <dbReference type="PROSITE-ProRule" id="PRU01129"/>
    </source>
</evidence>
<evidence type="ECO:0000256" key="3">
    <source>
        <dbReference type="SAM" id="MobiDB-lite"/>
    </source>
</evidence>
<feature type="chain" id="PRO_0000359882" description="Protein Mis18-alpha">
    <location>
        <begin position="1"/>
        <end position="223"/>
    </location>
</feature>
<feature type="domain" description="Mis18" evidence="2">
    <location>
        <begin position="71"/>
        <end position="169"/>
    </location>
</feature>
<feature type="region of interest" description="Disordered" evidence="3">
    <location>
        <begin position="1"/>
        <end position="30"/>
    </location>
</feature>
<feature type="compositionally biased region" description="Polar residues" evidence="3">
    <location>
        <begin position="9"/>
        <end position="18"/>
    </location>
</feature>
<feature type="compositionally biased region" description="Basic and acidic residues" evidence="3">
    <location>
        <begin position="21"/>
        <end position="30"/>
    </location>
</feature>
<feature type="binding site" evidence="2">
    <location>
        <position position="76"/>
    </location>
    <ligand>
        <name>Zn(2+)</name>
        <dbReference type="ChEBI" id="CHEBI:29105"/>
    </ligand>
</feature>
<feature type="binding site" evidence="2">
    <location>
        <position position="79"/>
    </location>
    <ligand>
        <name>Zn(2+)</name>
        <dbReference type="ChEBI" id="CHEBI:29105"/>
    </ligand>
</feature>
<feature type="binding site" evidence="2">
    <location>
        <position position="132"/>
    </location>
    <ligand>
        <name>Zn(2+)</name>
        <dbReference type="ChEBI" id="CHEBI:29105"/>
    </ligand>
</feature>
<feature type="binding site" evidence="2">
    <location>
        <position position="135"/>
    </location>
    <ligand>
        <name>Zn(2+)</name>
        <dbReference type="ChEBI" id="CHEBI:29105"/>
    </ligand>
</feature>
<feature type="modified residue" description="Phosphoserine" evidence="1">
    <location>
        <position position="33"/>
    </location>
</feature>
<feature type="modified residue" description="Phosphoserine" evidence="1">
    <location>
        <position position="36"/>
    </location>
</feature>
<feature type="modified residue" description="Phosphoserine" evidence="1">
    <location>
        <position position="37"/>
    </location>
</feature>
<feature type="modified residue" description="Phosphoserine" evidence="1">
    <location>
        <position position="223"/>
    </location>
</feature>
<feature type="cross-link" description="Glycyl lysine isopeptide (Lys-Gly) (interchain with G-Cter in SUMO2)" evidence="1">
    <location>
        <position position="153"/>
    </location>
</feature>
<dbReference type="EMBL" id="BC167102">
    <property type="protein sequence ID" value="AAI67102.1"/>
    <property type="molecule type" value="mRNA"/>
</dbReference>
<dbReference type="RefSeq" id="NP_001120995.2">
    <property type="nucleotide sequence ID" value="NM_001127523.2"/>
</dbReference>
<dbReference type="SMR" id="B2RZC4"/>
<dbReference type="FunCoup" id="B2RZC4">
    <property type="interactions" value="1572"/>
</dbReference>
<dbReference type="STRING" id="10116.ENSRNOP00000037080"/>
<dbReference type="PhosphoSitePlus" id="B2RZC4"/>
<dbReference type="PaxDb" id="10116-ENSRNOP00000037080"/>
<dbReference type="Ensembl" id="ENSRNOT00000037444.6">
    <property type="protein sequence ID" value="ENSRNOP00000037080.6"/>
    <property type="gene ID" value="ENSRNOG00000021555.6"/>
</dbReference>
<dbReference type="GeneID" id="288272"/>
<dbReference type="KEGG" id="rno:288272"/>
<dbReference type="UCSC" id="RGD:1310778">
    <property type="organism name" value="rat"/>
</dbReference>
<dbReference type="AGR" id="RGD:1310778"/>
<dbReference type="CTD" id="54069"/>
<dbReference type="RGD" id="1310778">
    <property type="gene designation" value="Mis18a"/>
</dbReference>
<dbReference type="eggNOG" id="ENOG502S3DZ">
    <property type="taxonomic scope" value="Eukaryota"/>
</dbReference>
<dbReference type="GeneTree" id="ENSGT00940000154267"/>
<dbReference type="HOGENOM" id="CLU_101031_0_0_1"/>
<dbReference type="InParanoid" id="B2RZC4"/>
<dbReference type="OMA" id="EMKMLVM"/>
<dbReference type="OrthoDB" id="74210at2759"/>
<dbReference type="PhylomeDB" id="B2RZC4"/>
<dbReference type="TreeFam" id="TF333200"/>
<dbReference type="Reactome" id="R-RNO-606279">
    <property type="pathway name" value="Deposition of new CENPA-containing nucleosomes at the centromere"/>
</dbReference>
<dbReference type="PRO" id="PR:B2RZC4"/>
<dbReference type="Proteomes" id="UP000002494">
    <property type="component" value="Chromosome 11"/>
</dbReference>
<dbReference type="GO" id="GO:0098654">
    <property type="term" value="C:CENP-A recruiting complex"/>
    <property type="evidence" value="ECO:0000266"/>
    <property type="project" value="RGD"/>
</dbReference>
<dbReference type="GO" id="GO:0000785">
    <property type="term" value="C:chromatin"/>
    <property type="evidence" value="ECO:0000318"/>
    <property type="project" value="GO_Central"/>
</dbReference>
<dbReference type="GO" id="GO:0000775">
    <property type="term" value="C:chromosome, centromeric region"/>
    <property type="evidence" value="ECO:0000266"/>
    <property type="project" value="RGD"/>
</dbReference>
<dbReference type="GO" id="GO:0005829">
    <property type="term" value="C:cytosol"/>
    <property type="evidence" value="ECO:0007669"/>
    <property type="project" value="Ensembl"/>
</dbReference>
<dbReference type="GO" id="GO:0005654">
    <property type="term" value="C:nucleoplasm"/>
    <property type="evidence" value="ECO:0007669"/>
    <property type="project" value="Ensembl"/>
</dbReference>
<dbReference type="GO" id="GO:0005634">
    <property type="term" value="C:nucleus"/>
    <property type="evidence" value="ECO:0000318"/>
    <property type="project" value="GO_Central"/>
</dbReference>
<dbReference type="GO" id="GO:0042802">
    <property type="term" value="F:identical protein binding"/>
    <property type="evidence" value="ECO:0000266"/>
    <property type="project" value="RGD"/>
</dbReference>
<dbReference type="GO" id="GO:0046872">
    <property type="term" value="F:metal ion binding"/>
    <property type="evidence" value="ECO:0007669"/>
    <property type="project" value="UniProtKB-KW"/>
</dbReference>
<dbReference type="GO" id="GO:0030674">
    <property type="term" value="F:protein-macromolecule adaptor activity"/>
    <property type="evidence" value="ECO:0000266"/>
    <property type="project" value="RGD"/>
</dbReference>
<dbReference type="GO" id="GO:0051301">
    <property type="term" value="P:cell division"/>
    <property type="evidence" value="ECO:0007669"/>
    <property type="project" value="UniProtKB-KW"/>
</dbReference>
<dbReference type="GO" id="GO:0034080">
    <property type="term" value="P:CENP-A containing chromatin assembly"/>
    <property type="evidence" value="ECO:0000266"/>
    <property type="project" value="RGD"/>
</dbReference>
<dbReference type="GO" id="GO:0007059">
    <property type="term" value="P:chromosome segregation"/>
    <property type="evidence" value="ECO:0000266"/>
    <property type="project" value="RGD"/>
</dbReference>
<dbReference type="GO" id="GO:0031507">
    <property type="term" value="P:heterochromatin formation"/>
    <property type="evidence" value="ECO:0000266"/>
    <property type="project" value="RGD"/>
</dbReference>
<dbReference type="GO" id="GO:0140462">
    <property type="term" value="P:pericentric heterochromatin organization"/>
    <property type="evidence" value="ECO:0000266"/>
    <property type="project" value="RGD"/>
</dbReference>
<dbReference type="GO" id="GO:0071459">
    <property type="term" value="P:protein localization to chromosome, centromeric region"/>
    <property type="evidence" value="ECO:0000266"/>
    <property type="project" value="RGD"/>
</dbReference>
<dbReference type="InterPro" id="IPR034752">
    <property type="entry name" value="Mis18"/>
</dbReference>
<dbReference type="InterPro" id="IPR004910">
    <property type="entry name" value="Yippee/Mis18/Cereblon"/>
</dbReference>
<dbReference type="PANTHER" id="PTHR16431">
    <property type="entry name" value="NEUROGENIC PROTEIN MASTERMIND"/>
    <property type="match status" value="1"/>
</dbReference>
<dbReference type="PANTHER" id="PTHR16431:SF2">
    <property type="entry name" value="PROTEIN MIS18-ALPHA"/>
    <property type="match status" value="1"/>
</dbReference>
<dbReference type="Pfam" id="PF03226">
    <property type="entry name" value="Yippee-Mis18"/>
    <property type="match status" value="1"/>
</dbReference>
<dbReference type="PROSITE" id="PS51793">
    <property type="entry name" value="MIS18"/>
    <property type="match status" value="1"/>
</dbReference>
<name>MS18A_RAT</name>
<comment type="function">
    <text evidence="1">Required for recruitment of CENPA to centromeres and normal chromosome segregation during mitosis.</text>
</comment>
<comment type="subunit">
    <text evidence="1">Homodimer, and heterodimer with OIP5/MIS18B. Identified in a complex containing MIS18A, OIP5/MIS18B, MIS18BP1, RBBP7 and RBBP4.</text>
</comment>
<comment type="subcellular location">
    <subcellularLocation>
        <location evidence="1">Nucleus</location>
    </subcellularLocation>
    <subcellularLocation>
        <location evidence="1">Chromosome</location>
    </subcellularLocation>
    <subcellularLocation>
        <location evidence="1">Chromosome</location>
        <location evidence="1">Centromere</location>
    </subcellularLocation>
    <text evidence="1">Associated with centromeres in interphase cells, from late anaphase to the G1 phase. Not detected on centromeres during earlier phases of mitosis. Associated with chromatin.</text>
</comment>
<comment type="similarity">
    <text evidence="2">Belongs to the mis18 family.</text>
</comment>
<accession>B2RZC4</accession>
<protein>
    <recommendedName>
        <fullName>Protein Mis18-alpha</fullName>
    </recommendedName>
</protein>
<reference key="1">
    <citation type="journal article" date="2004" name="Genome Res.">
        <title>The status, quality, and expansion of the NIH full-length cDNA project: the Mammalian Gene Collection (MGC).</title>
        <authorList>
            <consortium name="The MGC Project Team"/>
        </authorList>
    </citation>
    <scope>NUCLEOTIDE SEQUENCE [LARGE SCALE MRNA]</scope>
    <source>
        <tissue>Liver</tissue>
    </source>
</reference>
<proteinExistence type="evidence at transcript level"/>